<feature type="chain" id="PRO_0000443422" description="Protein phosphatase eya-1">
    <location>
        <begin position="1"/>
        <end position="503"/>
    </location>
</feature>
<feature type="active site" description="Nucleophile" evidence="1">
    <location>
        <position position="237"/>
    </location>
</feature>
<feature type="active site" description="Proton donor" evidence="1">
    <location>
        <position position="239"/>
    </location>
</feature>
<feature type="binding site" evidence="1">
    <location>
        <position position="237"/>
    </location>
    <ligand>
        <name>Mg(2+)</name>
        <dbReference type="ChEBI" id="CHEBI:18420"/>
    </ligand>
</feature>
<feature type="binding site" evidence="1">
    <location>
        <position position="239"/>
    </location>
    <ligand>
        <name>Mg(2+)</name>
        <dbReference type="ChEBI" id="CHEBI:18420"/>
    </ligand>
</feature>
<feature type="splice variant" id="VSP_059346" description="In isoform b." evidence="11">
    <location>
        <begin position="1"/>
        <end position="34"/>
    </location>
</feature>
<accession>O17670</accession>
<accession>Q564S5</accession>
<sequence length="503" mass="54522">MLPDSEGQKLKTFLLGTGTTLDPSLDPTGNSNFSMATTSDSSTIWTALPASQPGDKDIPTVDLAAISEAYGSTSSTTSLTSSVTSQYQYNSYPQYAMYTSANPANYYQQVTANLRAGTTAFPYSLTTPSYYGSYPVDYTSAAAAYQNPYYTNLRGGTAAPYYNPLNATTAAAYASVASSVLGTDAVNLGTSSDGSTGVPSTVTSFSLKEKKPKVSKKKKTGSCSPGDETYARVFIWDIDDIAVISRNYLASVTHTNEFYARAANSVSHLMERIALNNFADVNEFLEGDITNIEDAVVDETTMDSGPIDNLRGLDVMRRVAPKYSAFRQFYTENSTKNDVAGFKQEQNGFNFELLERVGFGAREATELYQSAIQLQTLPNFGQRWPCAQRCMDLVVEKSKLSAEKYANVVLSNDGLVLGAAQLMISGLNSSVPVENIYSISKQGKESVFEKIQSRFGKKCSFICITSGDTANSAKRLNIPVWPLNSNTDLDKLYSALDNFLLGG</sequence>
<proteinExistence type="evidence at protein level"/>
<gene>
    <name evidence="9 13" type="primary">eya-1</name>
    <name evidence="13" type="ORF">C49A1.4</name>
</gene>
<name>EYA1_CAEEL</name>
<protein>
    <recommendedName>
        <fullName evidence="11">Protein phosphatase eya-1</fullName>
        <ecNumber evidence="3">3.1.3.48</ecNumber>
    </recommendedName>
    <alternativeName>
        <fullName evidence="3 10">Eyes absent homolog 1</fullName>
    </alternativeName>
</protein>
<comment type="function">
    <text evidence="2 4 5 6 7 8">Tyrosine protein phosphatase (By similarity). Acts probably as a transcription regulator in the embryonic and postembryonic development of several tissues including pharynx, vulva and gonads (PubMed:16154558). Required for the development of anterior tissues during late embryogenesis (PubMed:16154558). Together with ceh-34, required to specify the coelomocyte fate in embryonic and postembryonic precursors (PubMed:19427847). In the anterior part of the embryo, prevents apoptosis in cells that are not fated to die (PubMed:16154558). Together with ceh-34 activates proapoptotic factor egl-1 expression to promote motor neuron M4 sister cell apoptosis (PubMed:20713707). Also promotes apoptosis of I1 pharyngeal neuron sister cell (PubMed:20713707). Plays a role in locomotion and fertility (PubMed:16154558). May play a role in resistance to heat and oxidative stresses (PubMed:25108328). May cooperate with the transcription factors vab-3 and ceh-32 to repress transcription factor ets-5 expression in non BAG neuronal cells (PubMed:30890567).</text>
</comment>
<comment type="catalytic activity">
    <reaction evidence="3">
        <text>O-phospho-L-tyrosyl-[protein] + H2O = L-tyrosyl-[protein] + phosphate</text>
        <dbReference type="Rhea" id="RHEA:10684"/>
        <dbReference type="Rhea" id="RHEA-COMP:10136"/>
        <dbReference type="Rhea" id="RHEA-COMP:20101"/>
        <dbReference type="ChEBI" id="CHEBI:15377"/>
        <dbReference type="ChEBI" id="CHEBI:43474"/>
        <dbReference type="ChEBI" id="CHEBI:46858"/>
        <dbReference type="ChEBI" id="CHEBI:61978"/>
        <dbReference type="EC" id="3.1.3.48"/>
    </reaction>
</comment>
<comment type="cofactor">
    <cofactor evidence="3">
        <name>Mg(2+)</name>
        <dbReference type="ChEBI" id="CHEBI:18420"/>
    </cofactor>
    <text evidence="3">Binds 1 Mg(2+) ion per subunit.</text>
</comment>
<comment type="subunit">
    <text evidence="5 6">Interacts (via C-terminus) with ceh-34 (via N-terminus).</text>
</comment>
<comment type="interaction">
    <interactant intactId="EBI-311862">
        <id>O17670</id>
    </interactant>
    <interactant intactId="EBI-317531">
        <id>Q11103</id>
        <label>C02F12.8</label>
    </interactant>
    <organismsDiffer>false</organismsDiffer>
    <experiments>3</experiments>
</comment>
<comment type="interaction">
    <interactant intactId="EBI-311862">
        <id>O17670</id>
    </interactant>
    <interactant intactId="EBI-2413136">
        <id>Q94165</id>
        <label>ceh-34</label>
    </interactant>
    <organismsDiffer>false</organismsDiffer>
    <experiments>3</experiments>
</comment>
<comment type="interaction">
    <interactant intactId="EBI-311862">
        <id>O17670</id>
    </interactant>
    <interactant intactId="EBI-317600">
        <id>H2KZ78</id>
        <label>CELE_C35E7.2</label>
    </interactant>
    <organismsDiffer>false</organismsDiffer>
    <experiments>3</experiments>
</comment>
<comment type="interaction">
    <interactant intactId="EBI-311862">
        <id>O17670</id>
    </interactant>
    <interactant intactId="EBI-317612">
        <id>Q9XXU2</id>
        <label>CELE_C53C7.3</label>
    </interactant>
    <organismsDiffer>false</organismsDiffer>
    <experiments>3</experiments>
</comment>
<comment type="interaction">
    <interactant intactId="EBI-311862">
        <id>O17670</id>
    </interactant>
    <interactant intactId="EBI-317902">
        <id>Q9N4P3</id>
        <label>CELE_ZK121.2</label>
    </interactant>
    <organismsDiffer>false</organismsDiffer>
    <experiments>3</experiments>
</comment>
<comment type="interaction">
    <interactant intactId="EBI-311862">
        <id>O17670</id>
    </interactant>
    <interactant intactId="EBI-317734">
        <id>Q21127</id>
        <label>meg-2</label>
    </interactant>
    <organismsDiffer>false</organismsDiffer>
    <experiments>3</experiments>
</comment>
<comment type="interaction">
    <interactant intactId="EBI-311862">
        <id>O17670</id>
    </interactant>
    <interactant intactId="EBI-313231">
        <id>Q10923</id>
        <label>ntl-2</label>
    </interactant>
    <organismsDiffer>false</organismsDiffer>
    <experiments>3</experiments>
</comment>
<comment type="interaction">
    <interactant intactId="EBI-311862">
        <id>O17670</id>
    </interactant>
    <interactant intactId="EBI-317870">
        <id>Q10666</id>
        <label>pop-1</label>
    </interactant>
    <organismsDiffer>false</organismsDiffer>
    <experiments>4</experiments>
</comment>
<comment type="interaction">
    <interactant intactId="EBI-311862">
        <id>O17670</id>
    </interactant>
    <interactant intactId="EBI-311866">
        <id>Q9XZI6</id>
        <label>unc-11</label>
    </interactant>
    <organismsDiffer>false</organismsDiffer>
    <experiments>4</experiments>
</comment>
<comment type="interaction">
    <interactant intactId="EBI-311862">
        <id>O17670</id>
    </interactant>
    <interactant intactId="EBI-317698">
        <id>O17894</id>
        <label>unc-39</label>
    </interactant>
    <organismsDiffer>false</organismsDiffer>
    <experiments>5</experiments>
</comment>
<comment type="subcellular location">
    <subcellularLocation>
        <location evidence="4 5">Nucleus</location>
    </subcellularLocation>
</comment>
<comment type="alternative products">
    <event type="alternative splicing"/>
    <isoform>
        <id>O17670-1</id>
        <name evidence="13">a</name>
        <sequence type="displayed"/>
    </isoform>
    <isoform>
        <id>O17670-2</id>
        <name evidence="14">b</name>
        <sequence type="described" ref="VSP_059346"/>
    </isoform>
</comment>
<comment type="tissue specificity">
    <text evidence="7 8">Expressed in body wall muscles (PubMed:25108328). Expressed in BAG sensory neurons and in other head neurons (PubMed:30890567).</text>
</comment>
<comment type="developmental stage">
    <text evidence="4 5 6">Expression starts at the embryonic bean stage in several anterior cells and continues until hatching (PubMed:16154558). Between the 1.5-fold and pretzel embryonic stages, expressed in a subset of pharyngeal cells and several anterior body wall muscle cells (PubMed:16154558). Expressed in the M lineage-derived coelomocyte precursor cells M.dlpa and M.drpa and in the 6 differentiated coelomocytes throughout development (PubMed:19427847). Expressed in the M4 motor neuron sister cell (PubMed:20713707).</text>
</comment>
<comment type="disruption phenotype">
    <text evidence="4 7">RNAi-mediated knockdown results in severe lethal arrest at an early larval stage (PubMed:16154558). The pharyngeal structure is disorganized and the anterior tip is thinner (PubMed:16154558). The phenotype is more severe in a pax-6 (ju468) mutant background (PubMed:16154558). RNAi-mediated knockdown in L1 larvae causes a decrease in resistance to heat or oxidative stresses characterized by a reduced lifespan, reduced heat shock protein hsp-16.2 expression and increased reactive oxygen species (ROS) production (PubMed:25108328).</text>
</comment>
<comment type="similarity">
    <text evidence="3">Belongs to the HAD-like hydrolase superfamily. EYA family.</text>
</comment>
<reference evidence="12" key="1">
    <citation type="journal article" date="1998" name="Science">
        <title>Genome sequence of the nematode C. elegans: a platform for investigating biology.</title>
        <authorList>
            <consortium name="The C. elegans sequencing consortium"/>
        </authorList>
    </citation>
    <scope>NUCLEOTIDE SEQUENCE [LARGE SCALE GENOMIC DNA]</scope>
    <source>
        <strain evidence="12">Bristol N2</strain>
    </source>
</reference>
<reference evidence="11" key="2">
    <citation type="journal article" date="2005" name="Dev. Biol.">
        <title>The C. elegans eyes absent ortholog EYA-1 is required for tissue differentiation and plays partially redundant roles with PAX-6.</title>
        <authorList>
            <person name="Furuya M."/>
            <person name="Qadota H."/>
            <person name="Chisholm A.D."/>
            <person name="Sugimoto A."/>
        </authorList>
    </citation>
    <scope>FUNCTION</scope>
    <scope>SUBCELLULAR LOCATION</scope>
    <scope>DEVELOPMENTAL STAGE</scope>
    <scope>DISRUPTION PHENOTYPE</scope>
</reference>
<reference evidence="11" key="3">
    <citation type="journal article" date="2009" name="Dev. Biol.">
        <title>A conserved Six-Eya cassette acts downstream of Wnt signaling to direct non-myogenic versus myogenic fates in the C. elegans postembryonic mesoderm.</title>
        <authorList>
            <person name="Amin N.M."/>
            <person name="Lim S.E."/>
            <person name="Shi H."/>
            <person name="Chan T.L."/>
            <person name="Liu J."/>
        </authorList>
    </citation>
    <scope>FUNCTION</scope>
    <scope>INTERACTION WITH CEH-34</scope>
    <scope>SUBCELLULAR LOCATION</scope>
    <scope>DEVELOPMENTAL STAGE</scope>
</reference>
<reference evidence="11" key="4">
    <citation type="journal article" date="2010" name="Proc. Natl. Acad. Sci. U.S.A.">
        <title>Six and Eya promote apoptosis through direct transcriptional activation of the proapoptotic BH3-only gene egl-1 in Caenorhabditis elegans.</title>
        <authorList>
            <person name="Hirose T."/>
            <person name="Galvin B.D."/>
            <person name="Horvitz H.R."/>
        </authorList>
    </citation>
    <scope>FUNCTION</scope>
    <scope>INTERACTION WITH CEH-34</scope>
    <scope>DEVELOPMENTAL STAGE</scope>
</reference>
<reference evidence="11" key="5">
    <citation type="journal article" date="2014" name="Biochemistry (Mosc.)">
        <title>Caenorhabditis elegans eyes absent ortholog EYA-1 is required for stress resistance.</title>
        <authorList>
            <person name="Wang B.Y."/>
            <person name="Xu X.S."/>
            <person name="Cui Y.X."/>
            <person name="Wang H."/>
            <person name="Liu G."/>
            <person name="Zhao Z.J."/>
            <person name="Ma J.F."/>
            <person name="Fu X.Q."/>
        </authorList>
    </citation>
    <scope>FUNCTION</scope>
    <scope>TISSUE SPECIFICITY</scope>
    <scope>DISRUPTION PHENOTYPE</scope>
</reference>
<reference key="6">
    <citation type="journal article" date="2019" name="Development">
        <title>Lineage context switches the function of a C. elegans Pax6 homolog in determining a neuronal fate.</title>
        <authorList>
            <person name="Brandt J.P."/>
            <person name="Rossillo M."/>
            <person name="Du Z."/>
            <person name="Ichikawa D."/>
            <person name="Barnes K."/>
            <person name="Chen A."/>
            <person name="Noyes M."/>
            <person name="Bao Z."/>
            <person name="Ringstad N."/>
        </authorList>
    </citation>
    <scope>FUNCTION</scope>
    <scope>TISSUE SPECIFICITY</scope>
</reference>
<keyword id="KW-0025">Alternative splicing</keyword>
<keyword id="KW-0217">Developmental protein</keyword>
<keyword id="KW-0378">Hydrolase</keyword>
<keyword id="KW-0460">Magnesium</keyword>
<keyword id="KW-0479">Metal-binding</keyword>
<keyword id="KW-0539">Nucleus</keyword>
<keyword id="KW-0904">Protein phosphatase</keyword>
<keyword id="KW-1185">Reference proteome</keyword>
<keyword id="KW-0804">Transcription</keyword>
<keyword id="KW-0805">Transcription regulation</keyword>
<organism evidence="12">
    <name type="scientific">Caenorhabditis elegans</name>
    <dbReference type="NCBI Taxonomy" id="6239"/>
    <lineage>
        <taxon>Eukaryota</taxon>
        <taxon>Metazoa</taxon>
        <taxon>Ecdysozoa</taxon>
        <taxon>Nematoda</taxon>
        <taxon>Chromadorea</taxon>
        <taxon>Rhabditida</taxon>
        <taxon>Rhabditina</taxon>
        <taxon>Rhabditomorpha</taxon>
        <taxon>Rhabditoidea</taxon>
        <taxon>Rhabditidae</taxon>
        <taxon>Peloderinae</taxon>
        <taxon>Caenorhabditis</taxon>
    </lineage>
</organism>
<evidence type="ECO:0000250" key="1">
    <source>
        <dbReference type="UniProtKB" id="O00167"/>
    </source>
</evidence>
<evidence type="ECO:0000250" key="2">
    <source>
        <dbReference type="UniProtKB" id="Q05201"/>
    </source>
</evidence>
<evidence type="ECO:0000255" key="3">
    <source>
        <dbReference type="RuleBase" id="RU362036"/>
    </source>
</evidence>
<evidence type="ECO:0000269" key="4">
    <source>
    </source>
</evidence>
<evidence type="ECO:0000269" key="5">
    <source>
    </source>
</evidence>
<evidence type="ECO:0000269" key="6">
    <source>
    </source>
</evidence>
<evidence type="ECO:0000269" key="7">
    <source>
    </source>
</evidence>
<evidence type="ECO:0000269" key="8">
    <source>
    </source>
</evidence>
<evidence type="ECO:0000303" key="9">
    <source>
    </source>
</evidence>
<evidence type="ECO:0000303" key="10">
    <source>
    </source>
</evidence>
<evidence type="ECO:0000305" key="11"/>
<evidence type="ECO:0000312" key="12">
    <source>
        <dbReference type="Proteomes" id="UP000001940"/>
    </source>
</evidence>
<evidence type="ECO:0000312" key="13">
    <source>
        <dbReference type="WormBase" id="C49A1.4a"/>
    </source>
</evidence>
<evidence type="ECO:0000312" key="14">
    <source>
        <dbReference type="WormBase" id="C49A1.4b"/>
    </source>
</evidence>
<dbReference type="EC" id="3.1.3.48" evidence="3"/>
<dbReference type="EMBL" id="BX284601">
    <property type="protein sequence ID" value="CAB05707.2"/>
    <property type="molecule type" value="Genomic_DNA"/>
</dbReference>
<dbReference type="EMBL" id="BX284601">
    <property type="protein sequence ID" value="CAI79139.1"/>
    <property type="molecule type" value="Genomic_DNA"/>
</dbReference>
<dbReference type="PIR" id="T20047">
    <property type="entry name" value="T20047"/>
</dbReference>
<dbReference type="RefSeq" id="NP_001021055.1">
    <molecule id="O17670-1"/>
    <property type="nucleotide sequence ID" value="NM_001025884.6"/>
</dbReference>
<dbReference type="RefSeq" id="NP_001021056.1">
    <property type="nucleotide sequence ID" value="NM_001025885.2"/>
</dbReference>
<dbReference type="RefSeq" id="NP_001367120.1">
    <molecule id="O17670-2"/>
    <property type="nucleotide sequence ID" value="NM_001381258.2"/>
</dbReference>
<dbReference type="SMR" id="O17670"/>
<dbReference type="DIP" id="DIP-26060N"/>
<dbReference type="FunCoup" id="O17670">
    <property type="interactions" value="1019"/>
</dbReference>
<dbReference type="IntAct" id="O17670">
    <property type="interactions" value="119"/>
</dbReference>
<dbReference type="STRING" id="6239.C49A1.4a.1"/>
<dbReference type="MoonDB" id="O17670">
    <property type="type" value="Predicted"/>
</dbReference>
<dbReference type="PaxDb" id="6239-C49A1.4a"/>
<dbReference type="EnsemblMetazoa" id="C49A1.4a.1">
    <molecule id="O17670-1"/>
    <property type="protein sequence ID" value="C49A1.4a.1"/>
    <property type="gene ID" value="WBGene00001377"/>
</dbReference>
<dbReference type="EnsemblMetazoa" id="C49A1.4b.1">
    <molecule id="O17670-2"/>
    <property type="protein sequence ID" value="C49A1.4b.1"/>
    <property type="gene ID" value="WBGene00001377"/>
</dbReference>
<dbReference type="EnsemblMetazoa" id="C49A1.4b.2">
    <molecule id="O17670-2"/>
    <property type="protein sequence ID" value="C49A1.4b.2"/>
    <property type="gene ID" value="WBGene00001377"/>
</dbReference>
<dbReference type="EnsemblMetazoa" id="C49A1.4b.3">
    <molecule id="O17670-2"/>
    <property type="protein sequence ID" value="C49A1.4b.3"/>
    <property type="gene ID" value="WBGene00001377"/>
</dbReference>
<dbReference type="GeneID" id="173293"/>
<dbReference type="KEGG" id="cel:CELE_C49A1.4"/>
<dbReference type="UCSC" id="C49A1.4a">
    <property type="organism name" value="c. elegans"/>
</dbReference>
<dbReference type="AGR" id="WB:WBGene00001377"/>
<dbReference type="CTD" id="173293"/>
<dbReference type="WormBase" id="C49A1.4a">
    <molecule id="O17670-1"/>
    <property type="protein sequence ID" value="CE36113"/>
    <property type="gene ID" value="WBGene00001377"/>
    <property type="gene designation" value="eya-1"/>
</dbReference>
<dbReference type="WormBase" id="C49A1.4b">
    <molecule id="O17670-2"/>
    <property type="protein sequence ID" value="CE15722"/>
    <property type="gene ID" value="WBGene00001377"/>
    <property type="gene designation" value="eya-1"/>
</dbReference>
<dbReference type="eggNOG" id="KOG3107">
    <property type="taxonomic scope" value="Eukaryota"/>
</dbReference>
<dbReference type="GeneTree" id="ENSGT00950000182978"/>
<dbReference type="InParanoid" id="O17670"/>
<dbReference type="OMA" id="QCASANN"/>
<dbReference type="OrthoDB" id="167668at2759"/>
<dbReference type="PhylomeDB" id="O17670"/>
<dbReference type="SignaLink" id="O17670"/>
<dbReference type="PRO" id="PR:O17670"/>
<dbReference type="Proteomes" id="UP000001940">
    <property type="component" value="Chromosome I"/>
</dbReference>
<dbReference type="Bgee" id="WBGene00001377">
    <property type="expression patterns" value="Expressed in pharyngeal muscle cell (C elegans) and 3 other cell types or tissues"/>
</dbReference>
<dbReference type="GO" id="GO:0005634">
    <property type="term" value="C:nucleus"/>
    <property type="evidence" value="ECO:0000314"/>
    <property type="project" value="WormBase"/>
</dbReference>
<dbReference type="GO" id="GO:0046872">
    <property type="term" value="F:metal ion binding"/>
    <property type="evidence" value="ECO:0007669"/>
    <property type="project" value="UniProtKB-KW"/>
</dbReference>
<dbReference type="GO" id="GO:0004725">
    <property type="term" value="F:protein tyrosine phosphatase activity"/>
    <property type="evidence" value="ECO:0000250"/>
    <property type="project" value="WormBase"/>
</dbReference>
<dbReference type="GO" id="GO:0003713">
    <property type="term" value="F:transcription coactivator activity"/>
    <property type="evidence" value="ECO:0000250"/>
    <property type="project" value="WormBase"/>
</dbReference>
<dbReference type="GO" id="GO:0030154">
    <property type="term" value="P:cell differentiation"/>
    <property type="evidence" value="ECO:0000318"/>
    <property type="project" value="GO_Central"/>
</dbReference>
<dbReference type="GO" id="GO:0018991">
    <property type="term" value="P:egg-laying behavior"/>
    <property type="evidence" value="ECO:0000315"/>
    <property type="project" value="WormBase"/>
</dbReference>
<dbReference type="GO" id="GO:0048598">
    <property type="term" value="P:embryonic morphogenesis"/>
    <property type="evidence" value="ECO:0000315"/>
    <property type="project" value="WormBase"/>
</dbReference>
<dbReference type="GO" id="GO:0040011">
    <property type="term" value="P:locomotion"/>
    <property type="evidence" value="ECO:0000315"/>
    <property type="project" value="WormBase"/>
</dbReference>
<dbReference type="GO" id="GO:0007501">
    <property type="term" value="P:mesodermal cell fate specification"/>
    <property type="evidence" value="ECO:0000315"/>
    <property type="project" value="WormBase"/>
</dbReference>
<dbReference type="GO" id="GO:0043066">
    <property type="term" value="P:negative regulation of apoptotic process"/>
    <property type="evidence" value="ECO:0000315"/>
    <property type="project" value="WormBase"/>
</dbReference>
<dbReference type="GO" id="GO:2001240">
    <property type="term" value="P:negative regulation of extrinsic apoptotic signaling pathway in absence of ligand"/>
    <property type="evidence" value="ECO:0000318"/>
    <property type="project" value="GO_Central"/>
</dbReference>
<dbReference type="GO" id="GO:0002119">
    <property type="term" value="P:nematode larval development"/>
    <property type="evidence" value="ECO:0000315"/>
    <property type="project" value="WormBase"/>
</dbReference>
<dbReference type="GO" id="GO:1904747">
    <property type="term" value="P:positive regulation of apoptotic process involved in development"/>
    <property type="evidence" value="ECO:0000315"/>
    <property type="project" value="UniProtKB"/>
</dbReference>
<dbReference type="GO" id="GO:1900036">
    <property type="term" value="P:positive regulation of cellular response to heat"/>
    <property type="evidence" value="ECO:0000315"/>
    <property type="project" value="UniProtKB"/>
</dbReference>
<dbReference type="GO" id="GO:0045739">
    <property type="term" value="P:positive regulation of DNA repair"/>
    <property type="evidence" value="ECO:0000318"/>
    <property type="project" value="GO_Central"/>
</dbReference>
<dbReference type="GO" id="GO:1902884">
    <property type="term" value="P:positive regulation of response to oxidative stress"/>
    <property type="evidence" value="ECO:0000315"/>
    <property type="project" value="UniProtKB"/>
</dbReference>
<dbReference type="GO" id="GO:0006355">
    <property type="term" value="P:regulation of DNA-templated transcription"/>
    <property type="evidence" value="ECO:0000315"/>
    <property type="project" value="UniProtKB"/>
</dbReference>
<dbReference type="GO" id="GO:0048729">
    <property type="term" value="P:tissue morphogenesis"/>
    <property type="evidence" value="ECO:0000315"/>
    <property type="project" value="WormBase"/>
</dbReference>
<dbReference type="CDD" id="cd02601">
    <property type="entry name" value="HAD_Eya"/>
    <property type="match status" value="1"/>
</dbReference>
<dbReference type="FunFam" id="3.40.50.12350:FF:000007">
    <property type="entry name" value="Eyes absent homolog"/>
    <property type="match status" value="1"/>
</dbReference>
<dbReference type="Gene3D" id="3.40.50.12350">
    <property type="match status" value="1"/>
</dbReference>
<dbReference type="InterPro" id="IPR028472">
    <property type="entry name" value="EYA"/>
</dbReference>
<dbReference type="InterPro" id="IPR042577">
    <property type="entry name" value="EYA_dom_metazoan"/>
</dbReference>
<dbReference type="InterPro" id="IPR038102">
    <property type="entry name" value="EYA_dom_sf"/>
</dbReference>
<dbReference type="PANTHER" id="PTHR10190:SF16">
    <property type="entry name" value="DEVELOPMENTAL PROTEIN EYES ABSENT"/>
    <property type="match status" value="1"/>
</dbReference>
<dbReference type="PANTHER" id="PTHR10190">
    <property type="entry name" value="EYES ABSENT"/>
    <property type="match status" value="1"/>
</dbReference>